<feature type="chain" id="PRO_0000312715" description="Probable intron-encoded endonuclease aI3">
    <location>
        <begin position="1"/>
        <end position="232"/>
    </location>
</feature>
<evidence type="ECO:0000250" key="1"/>
<evidence type="ECO:0000305" key="2"/>
<accession>O21045</accession>
<reference key="1">
    <citation type="journal article" date="1997" name="Curr. Genet.">
        <title>Group-I introns in the cytochrome c oxidase genes of Dictyostelium discoideum: two related ORFs in one loop of a group-I intron, a cox1/2 hybrid gene and an unusually large cox3 gene.</title>
        <authorList>
            <person name="Ogawa S."/>
            <person name="Matsuo K."/>
            <person name="Angata K."/>
            <person name="Yanagisawa K."/>
            <person name="Tanaka Y."/>
        </authorList>
    </citation>
    <scope>NUCLEOTIDE SEQUENCE [GENOMIC DNA]</scope>
    <source>
        <strain>AX3</strain>
    </source>
</reference>
<reference key="2">
    <citation type="journal article" date="2000" name="Mol. Gen. Genet.">
        <title>The mitochondrial DNA of Dictyostelium discoideum: complete sequence, gene content and genome organization.</title>
        <authorList>
            <person name="Ogawa S."/>
            <person name="Yoshino R."/>
            <person name="Angata K."/>
            <person name="Iwamoto M."/>
            <person name="Pi M."/>
            <person name="Kuroe K."/>
            <person name="Matsuo K."/>
            <person name="Morio T."/>
            <person name="Urushihara H."/>
            <person name="Yanagisawa K."/>
            <person name="Tanaka Y."/>
        </authorList>
    </citation>
    <scope>NUCLEOTIDE SEQUENCE [LARGE SCALE GENOMIC DNA]</scope>
    <source>
        <strain>AX3</strain>
    </source>
</reference>
<comment type="function">
    <text evidence="1">Mitochondrial DNA endonuclease involved in intron homing.</text>
</comment>
<comment type="subcellular location">
    <subcellularLocation>
        <location evidence="1">Mitochondrion</location>
    </subcellularLocation>
</comment>
<comment type="similarity">
    <text evidence="2">Belongs to the LAGLIDADG endonuclease family.</text>
</comment>
<proteinExistence type="inferred from homology"/>
<name>AI3_DICDI</name>
<protein>
    <recommendedName>
        <fullName>Probable intron-encoded endonuclease aI3</fullName>
        <ecNumber>3.1.-.-</ecNumber>
    </recommendedName>
    <alternativeName>
        <fullName>Cox1/2 intron3 ORF</fullName>
    </alternativeName>
</protein>
<sequence>MKVEEREYIKKYWVGLMDGVGSIEVNHYRMKNLQYRLVLNVNDSSENMAMLLKIQQVIGGYLIKRKEKALIAWTINNKMQIEDVIKIFEDYNLVTVRKRNQLQFLKENLKRNDVNWYLSERKNKYKKSLIVSNIEEISYFNEWFSGFVEATGSFCIRAQKEKYFRIAHRYDMPLLLNLIIKFNITTKLREQKNEQYAIEIYKKTLLEVLITHFEKYPLLGDKKNSLETFKTR</sequence>
<organism>
    <name type="scientific">Dictyostelium discoideum</name>
    <name type="common">Social amoeba</name>
    <dbReference type="NCBI Taxonomy" id="44689"/>
    <lineage>
        <taxon>Eukaryota</taxon>
        <taxon>Amoebozoa</taxon>
        <taxon>Evosea</taxon>
        <taxon>Eumycetozoa</taxon>
        <taxon>Dictyostelia</taxon>
        <taxon>Dictyosteliales</taxon>
        <taxon>Dictyosteliaceae</taxon>
        <taxon>Dictyostelium</taxon>
    </lineage>
</organism>
<dbReference type="EC" id="3.1.-.-"/>
<dbReference type="EMBL" id="D50297">
    <property type="protein sequence ID" value="BAA21126.1"/>
    <property type="molecule type" value="Genomic_DNA"/>
</dbReference>
<dbReference type="EMBL" id="AB000109">
    <property type="protein sequence ID" value="BAA78058.1"/>
    <property type="molecule type" value="Genomic_DNA"/>
</dbReference>
<dbReference type="PIR" id="T43754">
    <property type="entry name" value="T43754"/>
</dbReference>
<dbReference type="RefSeq" id="NP_050076.1">
    <property type="nucleotide sequence ID" value="NC_000895.1"/>
</dbReference>
<dbReference type="SMR" id="O21045"/>
<dbReference type="STRING" id="44689.O21045"/>
<dbReference type="KEGG" id="ddi:DidioMp09"/>
<dbReference type="dictyBase" id="DDB_G0294425">
    <property type="gene designation" value="ai3"/>
</dbReference>
<dbReference type="VEuPathDB" id="AmoebaDB:DidioMp09"/>
<dbReference type="InParanoid" id="O21045"/>
<dbReference type="PhylomeDB" id="O21045"/>
<dbReference type="PRO" id="PR:O21045"/>
<dbReference type="Proteomes" id="UP000002195">
    <property type="component" value="Mitochondrion"/>
</dbReference>
<dbReference type="GO" id="GO:0005739">
    <property type="term" value="C:mitochondrion"/>
    <property type="evidence" value="ECO:0007669"/>
    <property type="project" value="UniProtKB-SubCell"/>
</dbReference>
<dbReference type="GO" id="GO:0004519">
    <property type="term" value="F:endonuclease activity"/>
    <property type="evidence" value="ECO:0007669"/>
    <property type="project" value="UniProtKB-KW"/>
</dbReference>
<dbReference type="GO" id="GO:0006314">
    <property type="term" value="P:intron homing"/>
    <property type="evidence" value="ECO:0007669"/>
    <property type="project" value="UniProtKB-KW"/>
</dbReference>
<dbReference type="Gene3D" id="3.10.28.10">
    <property type="entry name" value="Homing endonucleases"/>
    <property type="match status" value="2"/>
</dbReference>
<dbReference type="InterPro" id="IPR027434">
    <property type="entry name" value="Homing_endonucl"/>
</dbReference>
<dbReference type="InterPro" id="IPR004860">
    <property type="entry name" value="LAGLIDADG_dom"/>
</dbReference>
<dbReference type="InterPro" id="IPR051289">
    <property type="entry name" value="LAGLIDADG_Endonuclease"/>
</dbReference>
<dbReference type="PANTHER" id="PTHR36181">
    <property type="entry name" value="INTRON-ENCODED ENDONUCLEASE AI3-RELATED"/>
    <property type="match status" value="1"/>
</dbReference>
<dbReference type="PANTHER" id="PTHR36181:SF2">
    <property type="entry name" value="INTRON-ENCODED ENDONUCLEASE AI3-RELATED"/>
    <property type="match status" value="1"/>
</dbReference>
<dbReference type="Pfam" id="PF00961">
    <property type="entry name" value="LAGLIDADG_1"/>
    <property type="match status" value="2"/>
</dbReference>
<dbReference type="SUPFAM" id="SSF55608">
    <property type="entry name" value="Homing endonucleases"/>
    <property type="match status" value="2"/>
</dbReference>
<geneLocation type="mitochondrion"/>
<gene>
    <name type="primary">aI3</name>
    <name type="ORF">DDB_G0294425</name>
</gene>
<keyword id="KW-0255">Endonuclease</keyword>
<keyword id="KW-0378">Hydrolase</keyword>
<keyword id="KW-0404">Intron homing</keyword>
<keyword id="KW-0496">Mitochondrion</keyword>
<keyword id="KW-0540">Nuclease</keyword>
<keyword id="KW-1185">Reference proteome</keyword>